<dbReference type="EMBL" id="AF129079">
    <property type="protein sequence ID" value="AAD28604.1"/>
    <property type="molecule type" value="mRNA"/>
</dbReference>
<dbReference type="EMBL" id="AE014134">
    <property type="protein sequence ID" value="AAF52736.1"/>
    <property type="molecule type" value="Genomic_DNA"/>
</dbReference>
<dbReference type="EMBL" id="AE014134">
    <property type="protein sequence ID" value="AAN10685.1"/>
    <property type="molecule type" value="Genomic_DNA"/>
</dbReference>
<dbReference type="EMBL" id="AY069836">
    <property type="protein sequence ID" value="AAL39981.1"/>
    <property type="molecule type" value="mRNA"/>
</dbReference>
<dbReference type="EMBL" id="AY118505">
    <property type="protein sequence ID" value="AAM49874.1"/>
    <property type="status" value="ALT_INIT"/>
    <property type="molecule type" value="mRNA"/>
</dbReference>
<dbReference type="EMBL" id="U57758">
    <property type="protein sequence ID" value="AAB49932.1"/>
    <property type="status" value="ALT_FRAME"/>
    <property type="molecule type" value="mRNA"/>
</dbReference>
<dbReference type="RefSeq" id="NP_001260276.1">
    <property type="nucleotide sequence ID" value="NM_001273347.1"/>
</dbReference>
<dbReference type="RefSeq" id="NP_001285771.1">
    <property type="nucleotide sequence ID" value="NM_001298842.1"/>
</dbReference>
<dbReference type="RefSeq" id="NP_523517.1">
    <property type="nucleotide sequence ID" value="NM_078793.6"/>
</dbReference>
<dbReference type="RefSeq" id="NP_723438.1">
    <property type="nucleotide sequence ID" value="NM_164843.3"/>
</dbReference>
<dbReference type="SMR" id="Q94899"/>
<dbReference type="BioGRID" id="60337">
    <property type="interactions" value="17"/>
</dbReference>
<dbReference type="ComplexPortal" id="CPX-7964">
    <property type="entry name" value="COP9 signalosome complex, testis-specific variant"/>
</dbReference>
<dbReference type="ComplexPortal" id="CPX-7974">
    <property type="entry name" value="COP9 signalosome complex"/>
</dbReference>
<dbReference type="DIP" id="DIP-19507N"/>
<dbReference type="FunCoup" id="Q94899">
    <property type="interactions" value="2537"/>
</dbReference>
<dbReference type="IntAct" id="Q94899">
    <property type="interactions" value="12"/>
</dbReference>
<dbReference type="STRING" id="7227.FBpp0308633"/>
<dbReference type="PaxDb" id="7227-FBpp0303869"/>
<dbReference type="DNASU" id="34225"/>
<dbReference type="EnsemblMetazoa" id="FBtr0079780">
    <property type="protein sequence ID" value="FBpp0079381"/>
    <property type="gene ID" value="FBgn0013746"/>
</dbReference>
<dbReference type="EnsemblMetazoa" id="FBtr0079781">
    <property type="protein sequence ID" value="FBpp0089195"/>
    <property type="gene ID" value="FBgn0013746"/>
</dbReference>
<dbReference type="EnsemblMetazoa" id="FBtr0339550">
    <property type="protein sequence ID" value="FBpp0308633"/>
    <property type="gene ID" value="FBgn0013746"/>
</dbReference>
<dbReference type="EnsemblMetazoa" id="FBtr0343095">
    <property type="protein sequence ID" value="FBpp0309805"/>
    <property type="gene ID" value="FBgn0013746"/>
</dbReference>
<dbReference type="GeneID" id="34225"/>
<dbReference type="KEGG" id="dme:Dmel_CG9556"/>
<dbReference type="AGR" id="FB:FBgn0013746"/>
<dbReference type="CTD" id="34225"/>
<dbReference type="FlyBase" id="FBgn0013746">
    <property type="gene designation" value="alien"/>
</dbReference>
<dbReference type="VEuPathDB" id="VectorBase:FBgn0013746"/>
<dbReference type="eggNOG" id="KOG1464">
    <property type="taxonomic scope" value="Eukaryota"/>
</dbReference>
<dbReference type="GeneTree" id="ENSGT00530000063301"/>
<dbReference type="HOGENOM" id="CLU_028981_0_1_1"/>
<dbReference type="InParanoid" id="Q94899"/>
<dbReference type="OMA" id="SEENWKD"/>
<dbReference type="OrthoDB" id="194139at2759"/>
<dbReference type="PhylomeDB" id="Q94899"/>
<dbReference type="Reactome" id="R-DME-5696394">
    <property type="pathway name" value="DNA Damage Recognition in GG-NER"/>
</dbReference>
<dbReference type="Reactome" id="R-DME-6781823">
    <property type="pathway name" value="Formation of TC-NER Pre-Incision Complex"/>
</dbReference>
<dbReference type="Reactome" id="R-DME-8856825">
    <property type="pathway name" value="Cargo recognition for clathrin-mediated endocytosis"/>
</dbReference>
<dbReference type="Reactome" id="R-DME-8951664">
    <property type="pathway name" value="Neddylation"/>
</dbReference>
<dbReference type="Reactome" id="R-DME-9013422">
    <property type="pathway name" value="RHOBTB1 GTPase cycle"/>
</dbReference>
<dbReference type="BioGRID-ORCS" id="34225">
    <property type="hits" value="0 hits in 1 CRISPR screen"/>
</dbReference>
<dbReference type="GenomeRNAi" id="34225"/>
<dbReference type="PRO" id="PR:Q94899"/>
<dbReference type="Proteomes" id="UP000000803">
    <property type="component" value="Chromosome 2L"/>
</dbReference>
<dbReference type="Bgee" id="FBgn0013746">
    <property type="expression patterns" value="Expressed in cleaving embryo and 138 other cell types or tissues"/>
</dbReference>
<dbReference type="ExpressionAtlas" id="Q94899">
    <property type="expression patterns" value="baseline and differential"/>
</dbReference>
<dbReference type="GO" id="GO:0008180">
    <property type="term" value="C:COP9 signalosome"/>
    <property type="evidence" value="ECO:0000314"/>
    <property type="project" value="UniProtKB"/>
</dbReference>
<dbReference type="GO" id="GO:0005737">
    <property type="term" value="C:cytoplasm"/>
    <property type="evidence" value="ECO:0000314"/>
    <property type="project" value="UniProtKB"/>
</dbReference>
<dbReference type="GO" id="GO:0008231">
    <property type="term" value="C:repressor ecdysone receptor complex"/>
    <property type="evidence" value="ECO:0000353"/>
    <property type="project" value="FlyBase"/>
</dbReference>
<dbReference type="GO" id="GO:0016922">
    <property type="term" value="F:nuclear receptor binding"/>
    <property type="evidence" value="ECO:0000353"/>
    <property type="project" value="FlyBase"/>
</dbReference>
<dbReference type="GO" id="GO:0003714">
    <property type="term" value="F:transcription corepressor activity"/>
    <property type="evidence" value="ECO:0000314"/>
    <property type="project" value="FlyBase"/>
</dbReference>
<dbReference type="GO" id="GO:0007562">
    <property type="term" value="P:eclosion"/>
    <property type="evidence" value="ECO:0000315"/>
    <property type="project" value="UniProtKB"/>
</dbReference>
<dbReference type="GO" id="GO:0036099">
    <property type="term" value="P:female germ-line stem cell population maintenance"/>
    <property type="evidence" value="ECO:0000315"/>
    <property type="project" value="FlyBase"/>
</dbReference>
<dbReference type="GO" id="GO:0007281">
    <property type="term" value="P:germ cell development"/>
    <property type="evidence" value="ECO:0000315"/>
    <property type="project" value="FlyBase"/>
</dbReference>
<dbReference type="GO" id="GO:0048142">
    <property type="term" value="P:germarium-derived cystoblast division"/>
    <property type="evidence" value="ECO:0000315"/>
    <property type="project" value="FlyBase"/>
</dbReference>
<dbReference type="GO" id="GO:0048140">
    <property type="term" value="P:male germ-line cyst encapsulation"/>
    <property type="evidence" value="ECO:0000315"/>
    <property type="project" value="FlyBase"/>
</dbReference>
<dbReference type="GO" id="GO:0045892">
    <property type="term" value="P:negative regulation of DNA-templated transcription"/>
    <property type="evidence" value="ECO:0000314"/>
    <property type="project" value="FlyBase"/>
</dbReference>
<dbReference type="GO" id="GO:0000338">
    <property type="term" value="P:protein deneddylation"/>
    <property type="evidence" value="ECO:0000250"/>
    <property type="project" value="FlyBase"/>
</dbReference>
<dbReference type="GO" id="GO:0050821">
    <property type="term" value="P:protein stabilization"/>
    <property type="evidence" value="ECO:0000315"/>
    <property type="project" value="FlyBase"/>
</dbReference>
<dbReference type="FunFam" id="1.25.40.570:FF:000001">
    <property type="entry name" value="Putative cop9 signalosome complex subunit 2"/>
    <property type="match status" value="1"/>
</dbReference>
<dbReference type="Gene3D" id="1.25.40.570">
    <property type="match status" value="1"/>
</dbReference>
<dbReference type="InterPro" id="IPR050871">
    <property type="entry name" value="26S_Proteasome/COP9_Components"/>
</dbReference>
<dbReference type="InterPro" id="IPR000717">
    <property type="entry name" value="PCI_dom"/>
</dbReference>
<dbReference type="InterPro" id="IPR036390">
    <property type="entry name" value="WH_DNA-bd_sf"/>
</dbReference>
<dbReference type="PANTHER" id="PTHR10678">
    <property type="entry name" value="26S PROTEASOME NON-ATPASE REGULATORY SUBUNIT 11/COP9 SIGNALOSOME COMPLEX SUBUNIT 2"/>
    <property type="match status" value="1"/>
</dbReference>
<dbReference type="Pfam" id="PF01399">
    <property type="entry name" value="PCI"/>
    <property type="match status" value="1"/>
</dbReference>
<dbReference type="SMART" id="SM00753">
    <property type="entry name" value="PAM"/>
    <property type="match status" value="1"/>
</dbReference>
<dbReference type="SMART" id="SM00088">
    <property type="entry name" value="PINT"/>
    <property type="match status" value="1"/>
</dbReference>
<dbReference type="SUPFAM" id="SSF46785">
    <property type="entry name" value="Winged helix' DNA-binding domain"/>
    <property type="match status" value="1"/>
</dbReference>
<dbReference type="PROSITE" id="PS50250">
    <property type="entry name" value="PCI"/>
    <property type="match status" value="1"/>
</dbReference>
<gene>
    <name evidence="15" type="primary">alien</name>
    <name evidence="10" type="synonym">CSN2</name>
    <name type="ORF">CG9556</name>
</gene>
<reference evidence="11" key="1">
    <citation type="journal article" date="1999" name="Curr. Biol.">
        <title>The COP9 signalosome is essential for development of Drosophila melanogaster.</title>
        <authorList>
            <person name="Freilich S."/>
            <person name="Oron E."/>
            <person name="Kapp Y."/>
            <person name="Nevo-Caspi Y."/>
            <person name="Orgad S."/>
            <person name="Segal D."/>
            <person name="Chamovitz D.A."/>
        </authorList>
    </citation>
    <scope>NUCLEOTIDE SEQUENCE [MRNA]</scope>
    <scope>FUNCTION</scope>
    <scope>SUBCELLULAR LOCATION</scope>
</reference>
<reference evidence="14" key="2">
    <citation type="journal article" date="2000" name="Science">
        <title>The genome sequence of Drosophila melanogaster.</title>
        <authorList>
            <person name="Adams M.D."/>
            <person name="Celniker S.E."/>
            <person name="Holt R.A."/>
            <person name="Evans C.A."/>
            <person name="Gocayne J.D."/>
            <person name="Amanatides P.G."/>
            <person name="Scherer S.E."/>
            <person name="Li P.W."/>
            <person name="Hoskins R.A."/>
            <person name="Galle R.F."/>
            <person name="George R.A."/>
            <person name="Lewis S.E."/>
            <person name="Richards S."/>
            <person name="Ashburner M."/>
            <person name="Henderson S.N."/>
            <person name="Sutton G.G."/>
            <person name="Wortman J.R."/>
            <person name="Yandell M.D."/>
            <person name="Zhang Q."/>
            <person name="Chen L.X."/>
            <person name="Brandon R.C."/>
            <person name="Rogers Y.-H.C."/>
            <person name="Blazej R.G."/>
            <person name="Champe M."/>
            <person name="Pfeiffer B.D."/>
            <person name="Wan K.H."/>
            <person name="Doyle C."/>
            <person name="Baxter E.G."/>
            <person name="Helt G."/>
            <person name="Nelson C.R."/>
            <person name="Miklos G.L.G."/>
            <person name="Abril J.F."/>
            <person name="Agbayani A."/>
            <person name="An H.-J."/>
            <person name="Andrews-Pfannkoch C."/>
            <person name="Baldwin D."/>
            <person name="Ballew R.M."/>
            <person name="Basu A."/>
            <person name="Baxendale J."/>
            <person name="Bayraktaroglu L."/>
            <person name="Beasley E.M."/>
            <person name="Beeson K.Y."/>
            <person name="Benos P.V."/>
            <person name="Berman B.P."/>
            <person name="Bhandari D."/>
            <person name="Bolshakov S."/>
            <person name="Borkova D."/>
            <person name="Botchan M.R."/>
            <person name="Bouck J."/>
            <person name="Brokstein P."/>
            <person name="Brottier P."/>
            <person name="Burtis K.C."/>
            <person name="Busam D.A."/>
            <person name="Butler H."/>
            <person name="Cadieu E."/>
            <person name="Center A."/>
            <person name="Chandra I."/>
            <person name="Cherry J.M."/>
            <person name="Cawley S."/>
            <person name="Dahlke C."/>
            <person name="Davenport L.B."/>
            <person name="Davies P."/>
            <person name="de Pablos B."/>
            <person name="Delcher A."/>
            <person name="Deng Z."/>
            <person name="Mays A.D."/>
            <person name="Dew I."/>
            <person name="Dietz S.M."/>
            <person name="Dodson K."/>
            <person name="Doup L.E."/>
            <person name="Downes M."/>
            <person name="Dugan-Rocha S."/>
            <person name="Dunkov B.C."/>
            <person name="Dunn P."/>
            <person name="Durbin K.J."/>
            <person name="Evangelista C.C."/>
            <person name="Ferraz C."/>
            <person name="Ferriera S."/>
            <person name="Fleischmann W."/>
            <person name="Fosler C."/>
            <person name="Gabrielian A.E."/>
            <person name="Garg N.S."/>
            <person name="Gelbart W.M."/>
            <person name="Glasser K."/>
            <person name="Glodek A."/>
            <person name="Gong F."/>
            <person name="Gorrell J.H."/>
            <person name="Gu Z."/>
            <person name="Guan P."/>
            <person name="Harris M."/>
            <person name="Harris N.L."/>
            <person name="Harvey D.A."/>
            <person name="Heiman T.J."/>
            <person name="Hernandez J.R."/>
            <person name="Houck J."/>
            <person name="Hostin D."/>
            <person name="Houston K.A."/>
            <person name="Howland T.J."/>
            <person name="Wei M.-H."/>
            <person name="Ibegwam C."/>
            <person name="Jalali M."/>
            <person name="Kalush F."/>
            <person name="Karpen G.H."/>
            <person name="Ke Z."/>
            <person name="Kennison J.A."/>
            <person name="Ketchum K.A."/>
            <person name="Kimmel B.E."/>
            <person name="Kodira C.D."/>
            <person name="Kraft C.L."/>
            <person name="Kravitz S."/>
            <person name="Kulp D."/>
            <person name="Lai Z."/>
            <person name="Lasko P."/>
            <person name="Lei Y."/>
            <person name="Levitsky A.A."/>
            <person name="Li J.H."/>
            <person name="Li Z."/>
            <person name="Liang Y."/>
            <person name="Lin X."/>
            <person name="Liu X."/>
            <person name="Mattei B."/>
            <person name="McIntosh T.C."/>
            <person name="McLeod M.P."/>
            <person name="McPherson D."/>
            <person name="Merkulov G."/>
            <person name="Milshina N.V."/>
            <person name="Mobarry C."/>
            <person name="Morris J."/>
            <person name="Moshrefi A."/>
            <person name="Mount S.M."/>
            <person name="Moy M."/>
            <person name="Murphy B."/>
            <person name="Murphy L."/>
            <person name="Muzny D.M."/>
            <person name="Nelson D.L."/>
            <person name="Nelson D.R."/>
            <person name="Nelson K.A."/>
            <person name="Nixon K."/>
            <person name="Nusskern D.R."/>
            <person name="Pacleb J.M."/>
            <person name="Palazzolo M."/>
            <person name="Pittman G.S."/>
            <person name="Pan S."/>
            <person name="Pollard J."/>
            <person name="Puri V."/>
            <person name="Reese M.G."/>
            <person name="Reinert K."/>
            <person name="Remington K."/>
            <person name="Saunders R.D.C."/>
            <person name="Scheeler F."/>
            <person name="Shen H."/>
            <person name="Shue B.C."/>
            <person name="Siden-Kiamos I."/>
            <person name="Simpson M."/>
            <person name="Skupski M.P."/>
            <person name="Smith T.J."/>
            <person name="Spier E."/>
            <person name="Spradling A.C."/>
            <person name="Stapleton M."/>
            <person name="Strong R."/>
            <person name="Sun E."/>
            <person name="Svirskas R."/>
            <person name="Tector C."/>
            <person name="Turner R."/>
            <person name="Venter E."/>
            <person name="Wang A.H."/>
            <person name="Wang X."/>
            <person name="Wang Z.-Y."/>
            <person name="Wassarman D.A."/>
            <person name="Weinstock G.M."/>
            <person name="Weissenbach J."/>
            <person name="Williams S.M."/>
            <person name="Woodage T."/>
            <person name="Worley K.C."/>
            <person name="Wu D."/>
            <person name="Yang S."/>
            <person name="Yao Q.A."/>
            <person name="Ye J."/>
            <person name="Yeh R.-F."/>
            <person name="Zaveri J.S."/>
            <person name="Zhan M."/>
            <person name="Zhang G."/>
            <person name="Zhao Q."/>
            <person name="Zheng L."/>
            <person name="Zheng X.H."/>
            <person name="Zhong F.N."/>
            <person name="Zhong W."/>
            <person name="Zhou X."/>
            <person name="Zhu S.C."/>
            <person name="Zhu X."/>
            <person name="Smith H.O."/>
            <person name="Gibbs R.A."/>
            <person name="Myers E.W."/>
            <person name="Rubin G.M."/>
            <person name="Venter J.C."/>
        </authorList>
    </citation>
    <scope>NUCLEOTIDE SEQUENCE [LARGE SCALE GENOMIC DNA]</scope>
    <source>
        <strain evidence="5">Berkeley</strain>
    </source>
</reference>
<reference evidence="11 14" key="3">
    <citation type="journal article" date="2002" name="Genome Biol.">
        <title>Annotation of the Drosophila melanogaster euchromatic genome: a systematic review.</title>
        <authorList>
            <person name="Misra S."/>
            <person name="Crosby M.A."/>
            <person name="Mungall C.J."/>
            <person name="Matthews B.B."/>
            <person name="Campbell K.S."/>
            <person name="Hradecky P."/>
            <person name="Huang Y."/>
            <person name="Kaminker J.S."/>
            <person name="Millburn G.H."/>
            <person name="Prochnik S.E."/>
            <person name="Smith C.D."/>
            <person name="Tupy J.L."/>
            <person name="Whitfield E.J."/>
            <person name="Bayraktaroglu L."/>
            <person name="Berman B.P."/>
            <person name="Bettencourt B.R."/>
            <person name="Celniker S.E."/>
            <person name="de Grey A.D.N.J."/>
            <person name="Drysdale R.A."/>
            <person name="Harris N.L."/>
            <person name="Richter J."/>
            <person name="Russo S."/>
            <person name="Schroeder A.J."/>
            <person name="Shu S.Q."/>
            <person name="Stapleton M."/>
            <person name="Yamada C."/>
            <person name="Ashburner M."/>
            <person name="Gelbart W.M."/>
            <person name="Rubin G.M."/>
            <person name="Lewis S.E."/>
        </authorList>
    </citation>
    <scope>GENOME REANNOTATION</scope>
    <source>
        <strain>Berkeley</strain>
    </source>
</reference>
<reference evidence="13" key="4">
    <citation type="journal article" date="2002" name="Genome Biol.">
        <title>A Drosophila full-length cDNA resource.</title>
        <authorList>
            <person name="Stapleton M."/>
            <person name="Carlson J.W."/>
            <person name="Brokstein P."/>
            <person name="Yu C."/>
            <person name="Champe M."/>
            <person name="George R.A."/>
            <person name="Guarin H."/>
            <person name="Kronmiller B."/>
            <person name="Pacleb J.M."/>
            <person name="Park S."/>
            <person name="Wan K.H."/>
            <person name="Rubin G.M."/>
            <person name="Celniker S.E."/>
        </authorList>
    </citation>
    <scope>NUCLEOTIDE SEQUENCE [LARGE SCALE MRNA]</scope>
    <source>
        <strain evidence="7">Berkeley</strain>
        <tissue evidence="7">Embryo</tissue>
    </source>
</reference>
<reference evidence="11" key="5">
    <citation type="journal article" date="1996" name="Mech. Dev.">
        <title>The Drosophila gene alien is expressed in the muscle attachment sites during embryogenesis and encodes a protein highly conserved between plants, Drosophila and vertebrates.</title>
        <authorList>
            <person name="Goubeaud A."/>
            <person name="Knirr S."/>
            <person name="Renkawitz-Pohl R."/>
            <person name="Paululat A."/>
        </authorList>
    </citation>
    <scope>NUCLEOTIDE SEQUENCE [MRNA] OF 1-363</scope>
    <scope>DEVELOPMENTAL STAGE</scope>
    <scope>TISSUE SPECIFICITY</scope>
    <source>
        <tissue evidence="9">Embryo</tissue>
    </source>
</reference>
<reference evidence="11" key="6">
    <citation type="journal article" date="2002" name="Gene">
        <title>The proteasome regulatory particle subunit Rpn6 is required for Drosophila development and interacts physically with signalosome subunit Alien/CSN2.</title>
        <authorList>
            <person name="Lier S."/>
            <person name="Paululat A."/>
        </authorList>
    </citation>
    <scope>INTERACTION WITH RPN6</scope>
</reference>
<reference evidence="11" key="7">
    <citation type="journal article" date="2003" name="Dev. Cell">
        <title>The COP9 signalosome promotes degradation of Cyclin E during early Drosophila oogenesis.</title>
        <authorList>
            <person name="Doronkin S."/>
            <person name="Djagaeva I."/>
            <person name="Beckendorf S.K."/>
        </authorList>
    </citation>
    <scope>FUNCTION OF CSN COMPLEX</scope>
</reference>
<sequence>MSDNDDDFMCDDDEDYGLEYSEDSNSEPDVDLENQYYNSKALKEEEPKAALASFQKVLDLENGEKGEWGFKALKQMIKINFRLCNYDEMMVRYKQLLTYIKSAVTRNHSEKSINSILDYISTSKNMALLQNFYETTLDALRDAKNDRLWFKTNTKLGKLYFDRSDFTKLQKILKQLHQSCQTDDGEDDLKKGTQLLEIYALEIQMYTVQKNNKKLKALYEQSLHIKSAIPHPLIMGVIRECGGKMHLREGEFEKAHTDFFEAFKNYDESGSPRRTTCLKYLVLANMLMKSGINPFDSQEAKPYKNDPEILAMTNLVNSYQNNDINEFETILRQHRSNIMADQFIREHIEDLLRNIRTQVLIKLIRPYKNIAIPFIANALNIEPAEVESLLVSCILDDTIKGRIDQVNQVLQLDKINSSASRYNALEKWSNQIQSLQFAVVQKMA</sequence>
<organism>
    <name type="scientific">Drosophila melanogaster</name>
    <name type="common">Fruit fly</name>
    <dbReference type="NCBI Taxonomy" id="7227"/>
    <lineage>
        <taxon>Eukaryota</taxon>
        <taxon>Metazoa</taxon>
        <taxon>Ecdysozoa</taxon>
        <taxon>Arthropoda</taxon>
        <taxon>Hexapoda</taxon>
        <taxon>Insecta</taxon>
        <taxon>Pterygota</taxon>
        <taxon>Neoptera</taxon>
        <taxon>Endopterygota</taxon>
        <taxon>Diptera</taxon>
        <taxon>Brachycera</taxon>
        <taxon>Muscomorpha</taxon>
        <taxon>Ephydroidea</taxon>
        <taxon>Drosophilidae</taxon>
        <taxon>Drosophila</taxon>
        <taxon>Sophophora</taxon>
    </lineage>
</organism>
<protein>
    <recommendedName>
        <fullName>COP9 signalosome complex subunit 2</fullName>
        <shortName>Dch2</shortName>
        <shortName>Signalosome subunit 2</shortName>
    </recommendedName>
    <alternativeName>
        <fullName>Alien protein</fullName>
    </alternativeName>
</protein>
<comment type="function">
    <text evidence="1 4 8">Component of the COP9 signalosome complex (CSN), a complex involved in various cellular and developmental processes. The CSN complex is an essential regulator of the ubiquitin (Ubl) conjugation pathway by mediating the deneddylation of the cullin subunits of the SCF-type E3 ligase complexes, leading to decrease the Ubl ligase activity of SCF. The CSN complex plays an essential role in oogenesis and embryogenesis and is required for proper photoreceptor R cell differentiation and promote lamina glial cell migration or axon targeting. It also promotes Ubl-dependent degradation of cyclin E (CycE) during early oogenesis.</text>
</comment>
<comment type="subunit">
    <text evidence="6">Component of the CSN complex, probably composed of CSN1b, alien/CSN2, CSN3, CSN4, CSN5, CSN6, CSN7 and CSN8. Interacts with Rpn6.</text>
</comment>
<comment type="subcellular location">
    <subcellularLocation>
        <location evidence="12">Cytoplasm</location>
    </subcellularLocation>
    <subcellularLocation>
        <location evidence="12">Nucleus</location>
    </subcellularLocation>
</comment>
<comment type="tissue specificity">
    <text evidence="9">Expressed during embryonic stages 11-14 in the muscle attachment sites (apodemes); pharynx attachment to the roof of the mouth and in the epidermis of the head for the dorsal and ventral prothoracic pharyngeal muscle attachment. From stage 16 onwards expression is seen in all thoracic and abdominal apodemes.</text>
</comment>
<comment type="developmental stage">
    <text evidence="9">Expressed both maternally with high levels during oogenesis, and zygotically.</text>
</comment>
<comment type="similarity">
    <text evidence="8">Belongs to the CSN2 family.</text>
</comment>
<comment type="sequence caution" evidence="11">
    <conflict type="frameshift">
        <sequence resource="EMBL-CDS" id="AAB49932"/>
    </conflict>
</comment>
<comment type="sequence caution" evidence="11">
    <conflict type="erroneous initiation">
        <sequence resource="EMBL-CDS" id="AAM49874"/>
    </conflict>
</comment>
<proteinExistence type="evidence at protein level"/>
<feature type="chain" id="PRO_0000120974" description="COP9 signalosome complex subunit 2">
    <location>
        <begin position="1"/>
        <end position="444"/>
    </location>
</feature>
<feature type="domain" description="PCI" evidence="2">
    <location>
        <begin position="255"/>
        <end position="417"/>
    </location>
</feature>
<feature type="region of interest" description="Disordered" evidence="3">
    <location>
        <begin position="1"/>
        <end position="31"/>
    </location>
</feature>
<evidence type="ECO:0000250" key="1">
    <source>
        <dbReference type="UniProtKB" id="Q15647"/>
    </source>
</evidence>
<evidence type="ECO:0000255" key="2">
    <source>
        <dbReference type="PROSITE-ProRule" id="PRU01185"/>
    </source>
</evidence>
<evidence type="ECO:0000256" key="3">
    <source>
        <dbReference type="SAM" id="MobiDB-lite"/>
    </source>
</evidence>
<evidence type="ECO:0000269" key="4">
    <source>
    </source>
</evidence>
<evidence type="ECO:0000269" key="5">
    <source>
    </source>
</evidence>
<evidence type="ECO:0000269" key="6">
    <source>
    </source>
</evidence>
<evidence type="ECO:0000269" key="7">
    <source>
    </source>
</evidence>
<evidence type="ECO:0000269" key="8">
    <source>
    </source>
</evidence>
<evidence type="ECO:0000269" key="9">
    <source>
    </source>
</evidence>
<evidence type="ECO:0000303" key="10">
    <source>
    </source>
</evidence>
<evidence type="ECO:0000305" key="11"/>
<evidence type="ECO:0000305" key="12">
    <source>
    </source>
</evidence>
<evidence type="ECO:0000312" key="13">
    <source>
        <dbReference type="EMBL" id="AAL39981.1"/>
    </source>
</evidence>
<evidence type="ECO:0000312" key="14">
    <source>
        <dbReference type="EMBL" id="AAN10685.1"/>
    </source>
</evidence>
<evidence type="ECO:0000312" key="15">
    <source>
        <dbReference type="FlyBase" id="FBgn0013746"/>
    </source>
</evidence>
<keyword id="KW-0963">Cytoplasm</keyword>
<keyword id="KW-0217">Developmental protein</keyword>
<keyword id="KW-0221">Differentiation</keyword>
<keyword id="KW-0539">Nucleus</keyword>
<keyword id="KW-0896">Oogenesis</keyword>
<keyword id="KW-1185">Reference proteome</keyword>
<keyword id="KW-0736">Signalosome</keyword>
<name>CSN2_DROME</name>
<accession>Q94899</accession>
<accession>A4V0G9</accession>
<accession>Q8MSX8</accession>
<accession>Q9V3Z0</accession>